<keyword id="KW-0378">Hydrolase</keyword>
<keyword id="KW-0460">Magnesium</keyword>
<keyword id="KW-0479">Metal-binding</keyword>
<proteinExistence type="inferred from homology"/>
<gene>
    <name type="primary">nudK</name>
    <name type="ordered locus">YPTB2757</name>
</gene>
<dbReference type="EC" id="3.6.1.-" evidence="1"/>
<dbReference type="EMBL" id="BX936398">
    <property type="protein sequence ID" value="CAH21995.1"/>
    <property type="status" value="ALT_INIT"/>
    <property type="molecule type" value="Genomic_DNA"/>
</dbReference>
<dbReference type="RefSeq" id="WP_002208529.1">
    <property type="nucleotide sequence ID" value="NZ_CP009712.1"/>
</dbReference>
<dbReference type="SMR" id="Q668I3"/>
<dbReference type="GeneID" id="57975667"/>
<dbReference type="KEGG" id="ypo:BZ17_3873"/>
<dbReference type="KEGG" id="yps:YPTB2757"/>
<dbReference type="PATRIC" id="fig|273123.14.peg.4067"/>
<dbReference type="Proteomes" id="UP000001011">
    <property type="component" value="Chromosome"/>
</dbReference>
<dbReference type="GO" id="GO:0005829">
    <property type="term" value="C:cytosol"/>
    <property type="evidence" value="ECO:0007669"/>
    <property type="project" value="TreeGrafter"/>
</dbReference>
<dbReference type="GO" id="GO:0016818">
    <property type="term" value="F:hydrolase activity, acting on acid anhydrides, in phosphorus-containing anhydrides"/>
    <property type="evidence" value="ECO:0007669"/>
    <property type="project" value="InterPro"/>
</dbReference>
<dbReference type="GO" id="GO:0046872">
    <property type="term" value="F:metal ion binding"/>
    <property type="evidence" value="ECO:0007669"/>
    <property type="project" value="UniProtKB-KW"/>
</dbReference>
<dbReference type="GO" id="GO:0006753">
    <property type="term" value="P:nucleoside phosphate metabolic process"/>
    <property type="evidence" value="ECO:0007669"/>
    <property type="project" value="TreeGrafter"/>
</dbReference>
<dbReference type="GO" id="GO:0019693">
    <property type="term" value="P:ribose phosphate metabolic process"/>
    <property type="evidence" value="ECO:0007669"/>
    <property type="project" value="TreeGrafter"/>
</dbReference>
<dbReference type="CDD" id="cd24157">
    <property type="entry name" value="NUDIX_GDPMK"/>
    <property type="match status" value="1"/>
</dbReference>
<dbReference type="FunFam" id="3.90.79.10:FF:000010">
    <property type="entry name" value="GDP-mannose pyrophosphatase NudK"/>
    <property type="match status" value="1"/>
</dbReference>
<dbReference type="Gene3D" id="3.90.79.10">
    <property type="entry name" value="Nucleoside Triphosphate Pyrophosphohydrolase"/>
    <property type="match status" value="1"/>
</dbReference>
<dbReference type="InterPro" id="IPR004385">
    <property type="entry name" value="NDP_pyrophosphatase"/>
</dbReference>
<dbReference type="InterPro" id="IPR015797">
    <property type="entry name" value="NUDIX_hydrolase-like_dom_sf"/>
</dbReference>
<dbReference type="InterPro" id="IPR000086">
    <property type="entry name" value="NUDIX_hydrolase_dom"/>
</dbReference>
<dbReference type="NCBIfam" id="TIGR00052">
    <property type="entry name" value="nudix-type nucleoside diphosphatase, YffH/AdpP family"/>
    <property type="match status" value="1"/>
</dbReference>
<dbReference type="NCBIfam" id="NF011585">
    <property type="entry name" value="PRK15009.1"/>
    <property type="match status" value="1"/>
</dbReference>
<dbReference type="PANTHER" id="PTHR11839:SF18">
    <property type="entry name" value="NUDIX HYDROLASE DOMAIN-CONTAINING PROTEIN"/>
    <property type="match status" value="1"/>
</dbReference>
<dbReference type="PANTHER" id="PTHR11839">
    <property type="entry name" value="UDP/ADP-SUGAR PYROPHOSPHATASE"/>
    <property type="match status" value="1"/>
</dbReference>
<dbReference type="Pfam" id="PF00293">
    <property type="entry name" value="NUDIX"/>
    <property type="match status" value="1"/>
</dbReference>
<dbReference type="SUPFAM" id="SSF55811">
    <property type="entry name" value="Nudix"/>
    <property type="match status" value="1"/>
</dbReference>
<dbReference type="PROSITE" id="PS51462">
    <property type="entry name" value="NUDIX"/>
    <property type="match status" value="1"/>
</dbReference>
<organism>
    <name type="scientific">Yersinia pseudotuberculosis serotype I (strain IP32953)</name>
    <dbReference type="NCBI Taxonomy" id="273123"/>
    <lineage>
        <taxon>Bacteria</taxon>
        <taxon>Pseudomonadati</taxon>
        <taxon>Pseudomonadota</taxon>
        <taxon>Gammaproteobacteria</taxon>
        <taxon>Enterobacterales</taxon>
        <taxon>Yersiniaceae</taxon>
        <taxon>Yersinia</taxon>
    </lineage>
</organism>
<name>NUDK_YERPS</name>
<reference key="1">
    <citation type="journal article" date="2004" name="Proc. Natl. Acad. Sci. U.S.A.">
        <title>Insights into the evolution of Yersinia pestis through whole-genome comparison with Yersinia pseudotuberculosis.</title>
        <authorList>
            <person name="Chain P.S.G."/>
            <person name="Carniel E."/>
            <person name="Larimer F.W."/>
            <person name="Lamerdin J."/>
            <person name="Stoutland P.O."/>
            <person name="Regala W.M."/>
            <person name="Georgescu A.M."/>
            <person name="Vergez L.M."/>
            <person name="Land M.L."/>
            <person name="Motin V.L."/>
            <person name="Brubaker R.R."/>
            <person name="Fowler J."/>
            <person name="Hinnebusch J."/>
            <person name="Marceau M."/>
            <person name="Medigue C."/>
            <person name="Simonet M."/>
            <person name="Chenal-Francisque V."/>
            <person name="Souza B."/>
            <person name="Dacheux D."/>
            <person name="Elliott J.M."/>
            <person name="Derbise A."/>
            <person name="Hauser L.J."/>
            <person name="Garcia E."/>
        </authorList>
    </citation>
    <scope>NUCLEOTIDE SEQUENCE [LARGE SCALE GENOMIC DNA]</scope>
    <source>
        <strain>IP32953</strain>
    </source>
</reference>
<comment type="function">
    <text evidence="1">Nucleoside diphosphate sugar hydrolase that hydrolyzes GDP-mannose as its preferred substrate, yielding GMP and mannose-1-phosphate.</text>
</comment>
<comment type="catalytic activity">
    <reaction evidence="1">
        <text>GDP-alpha-D-mannose + H2O = alpha-D-mannose 1-phosphate + GMP + 2 H(+)</text>
        <dbReference type="Rhea" id="RHEA:27978"/>
        <dbReference type="ChEBI" id="CHEBI:15377"/>
        <dbReference type="ChEBI" id="CHEBI:15378"/>
        <dbReference type="ChEBI" id="CHEBI:57527"/>
        <dbReference type="ChEBI" id="CHEBI:58115"/>
        <dbReference type="ChEBI" id="CHEBI:58409"/>
    </reaction>
</comment>
<comment type="cofactor">
    <cofactor evidence="1">
        <name>Mg(2+)</name>
        <dbReference type="ChEBI" id="CHEBI:18420"/>
    </cofactor>
</comment>
<comment type="subunit">
    <text evidence="1">Homodimer.</text>
</comment>
<comment type="domain">
    <text evidence="1">In the dimer, the N-terminal domains are swapped between the two monomers, such that residues of both chains contribute to the active site.</text>
</comment>
<comment type="similarity">
    <text evidence="3">Belongs to the Nudix hydrolase family. NudK subfamily.</text>
</comment>
<comment type="sequence caution" evidence="3">
    <conflict type="erroneous initiation">
        <sequence resource="EMBL-CDS" id="CAH21995"/>
    </conflict>
</comment>
<feature type="chain" id="PRO_0000342509" description="GDP-mannose pyrophosphatase">
    <location>
        <begin position="1"/>
        <end position="198"/>
    </location>
</feature>
<feature type="domain" description="Nudix hydrolase" evidence="2">
    <location>
        <begin position="43"/>
        <end position="180"/>
    </location>
</feature>
<feature type="short sequence motif" description="Nudix box">
    <location>
        <begin position="86"/>
        <end position="106"/>
    </location>
</feature>
<feature type="binding site" evidence="1">
    <location>
        <begin position="38"/>
        <end position="40"/>
    </location>
    <ligand>
        <name>GDP-alpha-D-mannose</name>
        <dbReference type="ChEBI" id="CHEBI:57527"/>
        <note>ligand shared between dimeric partners</note>
    </ligand>
</feature>
<feature type="binding site" description="in other chain" evidence="1">
    <location>
        <position position="67"/>
    </location>
    <ligand>
        <name>GDP-alpha-D-mannose</name>
        <dbReference type="ChEBI" id="CHEBI:57527"/>
        <note>ligand shared between dimeric partners</note>
    </ligand>
</feature>
<feature type="binding site" description="in other chain" evidence="1">
    <location>
        <begin position="85"/>
        <end position="87"/>
    </location>
    <ligand>
        <name>GDP-alpha-D-mannose</name>
        <dbReference type="ChEBI" id="CHEBI:57527"/>
        <note>ligand shared between dimeric partners</note>
    </ligand>
</feature>
<feature type="binding site" evidence="1">
    <location>
        <position position="85"/>
    </location>
    <ligand>
        <name>Mg(2+)</name>
        <dbReference type="ChEBI" id="CHEBI:18420"/>
        <label>1</label>
    </ligand>
</feature>
<feature type="binding site" evidence="1">
    <location>
        <position position="100"/>
    </location>
    <ligand>
        <name>Mg(2+)</name>
        <dbReference type="ChEBI" id="CHEBI:18420"/>
        <label>2</label>
    </ligand>
</feature>
<feature type="binding site" description="in other chain" evidence="1">
    <location>
        <position position="104"/>
    </location>
    <ligand>
        <name>GDP-alpha-D-mannose</name>
        <dbReference type="ChEBI" id="CHEBI:57527"/>
        <note>ligand shared between dimeric partners</note>
    </ligand>
</feature>
<feature type="binding site" evidence="1">
    <location>
        <position position="104"/>
    </location>
    <ligand>
        <name>Mg(2+)</name>
        <dbReference type="ChEBI" id="CHEBI:18420"/>
        <label>1</label>
    </ligand>
</feature>
<feature type="binding site" evidence="1">
    <location>
        <position position="104"/>
    </location>
    <ligand>
        <name>Mg(2+)</name>
        <dbReference type="ChEBI" id="CHEBI:18420"/>
        <label>2</label>
    </ligand>
</feature>
<feature type="binding site" description="in other chain" evidence="1">
    <location>
        <position position="127"/>
    </location>
    <ligand>
        <name>GDP-alpha-D-mannose</name>
        <dbReference type="ChEBI" id="CHEBI:57527"/>
        <note>ligand shared between dimeric partners</note>
    </ligand>
</feature>
<feature type="binding site" description="in other chain" evidence="1">
    <location>
        <begin position="150"/>
        <end position="151"/>
    </location>
    <ligand>
        <name>GDP-alpha-D-mannose</name>
        <dbReference type="ChEBI" id="CHEBI:57527"/>
        <note>ligand shared between dimeric partners</note>
    </ligand>
</feature>
<feature type="binding site" evidence="1">
    <location>
        <position position="151"/>
    </location>
    <ligand>
        <name>Mg(2+)</name>
        <dbReference type="ChEBI" id="CHEBI:18420"/>
        <label>2</label>
    </ligand>
</feature>
<feature type="binding site" description="in other chain" evidence="1">
    <location>
        <position position="176"/>
    </location>
    <ligand>
        <name>GDP-alpha-D-mannose</name>
        <dbReference type="ChEBI" id="CHEBI:57527"/>
        <note>ligand shared between dimeric partners</note>
    </ligand>
</feature>
<accession>Q668I3</accession>
<evidence type="ECO:0000250" key="1">
    <source>
        <dbReference type="UniProtKB" id="P37128"/>
    </source>
</evidence>
<evidence type="ECO:0000255" key="2">
    <source>
        <dbReference type="PROSITE-ProRule" id="PRU00794"/>
    </source>
</evidence>
<evidence type="ECO:0000305" key="3"/>
<sequence>MSVKIENIQCELLSKNWFKLHKYTFDLKTDEGTSVQQIREVYDRGNGATILLYNRQQGTVVLIEQFRMPTYVNGNASGMLLEACAGLLDNDSPEACIRREAMEETGYQVDKVQKLFEAYMSPGGVTELVYFFAAEYHPDQKITDEVGVEDEVIEVVELPFHDALAMVADGRIKDGKTIMLLQYAQIHFFPSSLTPQRC</sequence>
<protein>
    <recommendedName>
        <fullName>GDP-mannose pyrophosphatase</fullName>
        <ecNumber evidence="1">3.6.1.-</ecNumber>
    </recommendedName>
    <alternativeName>
        <fullName>GDP-mannose hydrolase</fullName>
    </alternativeName>
    <alternativeName>
        <fullName>GDPMK</fullName>
    </alternativeName>
</protein>